<accession>Q55CI8</accession>
<organism>
    <name type="scientific">Dictyostelium discoideum</name>
    <name type="common">Social amoeba</name>
    <dbReference type="NCBI Taxonomy" id="44689"/>
    <lineage>
        <taxon>Eukaryota</taxon>
        <taxon>Amoebozoa</taxon>
        <taxon>Evosea</taxon>
        <taxon>Eumycetozoa</taxon>
        <taxon>Dictyostelia</taxon>
        <taxon>Dictyosteliales</taxon>
        <taxon>Dictyosteliaceae</taxon>
        <taxon>Dictyostelium</taxon>
    </lineage>
</organism>
<name>HELCL_DICDI</name>
<proteinExistence type="inferred from homology"/>
<evidence type="ECO:0000255" key="1"/>
<evidence type="ECO:0000255" key="2">
    <source>
        <dbReference type="PROSITE-ProRule" id="PRU00541"/>
    </source>
</evidence>
<evidence type="ECO:0000255" key="3">
    <source>
        <dbReference type="PROSITE-ProRule" id="PRU00542"/>
    </source>
</evidence>
<evidence type="ECO:0000256" key="4">
    <source>
        <dbReference type="SAM" id="MobiDB-lite"/>
    </source>
</evidence>
<evidence type="ECO:0000305" key="5"/>
<dbReference type="EC" id="3.6.4.-"/>
<dbReference type="EMBL" id="AAFI02000005">
    <property type="protein sequence ID" value="EAL72371.1"/>
    <property type="molecule type" value="Genomic_DNA"/>
</dbReference>
<dbReference type="RefSeq" id="XP_646493.1">
    <property type="nucleotide sequence ID" value="XM_641401.1"/>
</dbReference>
<dbReference type="SMR" id="Q55CI8"/>
<dbReference type="FunCoup" id="Q55CI8">
    <property type="interactions" value="1112"/>
</dbReference>
<dbReference type="STRING" id="44689.Q55CI8"/>
<dbReference type="PaxDb" id="44689-DDB0233131"/>
<dbReference type="EnsemblProtists" id="EAL72371">
    <property type="protein sequence ID" value="EAL72371"/>
    <property type="gene ID" value="DDB_G0270042"/>
</dbReference>
<dbReference type="GeneID" id="8617455"/>
<dbReference type="KEGG" id="ddi:DDB_G0270042"/>
<dbReference type="dictyBase" id="DDB_G0270042">
    <property type="gene designation" value="ascc3l"/>
</dbReference>
<dbReference type="VEuPathDB" id="AmoebaDB:DDB_G0270042"/>
<dbReference type="eggNOG" id="KOG0951">
    <property type="taxonomic scope" value="Eukaryota"/>
</dbReference>
<dbReference type="HOGENOM" id="CLU_000335_1_0_1"/>
<dbReference type="InParanoid" id="Q55CI8"/>
<dbReference type="OMA" id="MNPKEFN"/>
<dbReference type="PhylomeDB" id="Q55CI8"/>
<dbReference type="Reactome" id="R-DDI-72163">
    <property type="pathway name" value="mRNA Splicing - Major Pathway"/>
</dbReference>
<dbReference type="PRO" id="PR:Q55CI8"/>
<dbReference type="Proteomes" id="UP000002195">
    <property type="component" value="Chromosome 1"/>
</dbReference>
<dbReference type="GO" id="GO:0005681">
    <property type="term" value="C:spliceosomal complex"/>
    <property type="evidence" value="ECO:0000250"/>
    <property type="project" value="dictyBase"/>
</dbReference>
<dbReference type="GO" id="GO:0005524">
    <property type="term" value="F:ATP binding"/>
    <property type="evidence" value="ECO:0007669"/>
    <property type="project" value="UniProtKB-KW"/>
</dbReference>
<dbReference type="GO" id="GO:0016887">
    <property type="term" value="F:ATP hydrolysis activity"/>
    <property type="evidence" value="ECO:0007669"/>
    <property type="project" value="InterPro"/>
</dbReference>
<dbReference type="GO" id="GO:0003676">
    <property type="term" value="F:nucleic acid binding"/>
    <property type="evidence" value="ECO:0007669"/>
    <property type="project" value="InterPro"/>
</dbReference>
<dbReference type="GO" id="GO:0003724">
    <property type="term" value="F:RNA helicase activity"/>
    <property type="evidence" value="ECO:0000318"/>
    <property type="project" value="GO_Central"/>
</dbReference>
<dbReference type="GO" id="GO:0008380">
    <property type="term" value="P:RNA splicing"/>
    <property type="evidence" value="ECO:0000250"/>
    <property type="project" value="dictyBase"/>
</dbReference>
<dbReference type="GO" id="GO:0000388">
    <property type="term" value="P:spliceosome conformational change to release U4 (or U4atac) and U1 (or U11)"/>
    <property type="evidence" value="ECO:0000318"/>
    <property type="project" value="GO_Central"/>
</dbReference>
<dbReference type="CDD" id="cd18019">
    <property type="entry name" value="DEXHc_Brr2_1"/>
    <property type="match status" value="1"/>
</dbReference>
<dbReference type="CDD" id="cd18021">
    <property type="entry name" value="DEXHc_Brr2_2"/>
    <property type="match status" value="1"/>
</dbReference>
<dbReference type="CDD" id="cd18795">
    <property type="entry name" value="SF2_C_Ski2"/>
    <property type="match status" value="1"/>
</dbReference>
<dbReference type="FunFam" id="1.10.3380.10:FF:000002">
    <property type="entry name" value="Activating signal cointegrator 1 complex subunit 3"/>
    <property type="match status" value="1"/>
</dbReference>
<dbReference type="FunFam" id="2.60.40.150:FF:000133">
    <property type="entry name" value="Pre-mRNA splicing helicase, putative"/>
    <property type="match status" value="1"/>
</dbReference>
<dbReference type="FunFam" id="2.60.40.150:FF:000004">
    <property type="entry name" value="RNA helicase, activating signal cointegrator 1"/>
    <property type="match status" value="1"/>
</dbReference>
<dbReference type="FunFam" id="3.40.50.300:FF:000102">
    <property type="entry name" value="RNA helicase, activating signal cointegrator 1"/>
    <property type="match status" value="1"/>
</dbReference>
<dbReference type="FunFam" id="3.40.50.300:FF:000368">
    <property type="entry name" value="U5 small nuclear ribonucleoprotein 200 kDa helicase"/>
    <property type="match status" value="1"/>
</dbReference>
<dbReference type="FunFam" id="1.10.10.10:FF:000012">
    <property type="entry name" value="U5 small nuclear ribonucleoprotein helicase"/>
    <property type="match status" value="1"/>
</dbReference>
<dbReference type="FunFam" id="1.10.10.10:FF:000024">
    <property type="entry name" value="U5 small nuclear ribonucleoprotein helicase"/>
    <property type="match status" value="1"/>
</dbReference>
<dbReference type="FunFam" id="1.10.150.20:FF:000004">
    <property type="entry name" value="U5 small nuclear ribonucleoprotein helicase"/>
    <property type="match status" value="1"/>
</dbReference>
<dbReference type="FunFam" id="1.10.3380.10:FF:000001">
    <property type="entry name" value="U5 small nuclear ribonucleoprotein helicase"/>
    <property type="match status" value="1"/>
</dbReference>
<dbReference type="FunFam" id="3.40.50.300:FF:000062">
    <property type="entry name" value="U5 small nuclear ribonucleoprotein helicase"/>
    <property type="match status" value="1"/>
</dbReference>
<dbReference type="FunFam" id="3.40.50.300:FF:000254">
    <property type="entry name" value="U5 small nuclear ribonucleoprotein helicase"/>
    <property type="match status" value="1"/>
</dbReference>
<dbReference type="Gene3D" id="1.10.150.20">
    <property type="entry name" value="5' to 3' exonuclease, C-terminal subdomain"/>
    <property type="match status" value="2"/>
</dbReference>
<dbReference type="Gene3D" id="2.60.40.150">
    <property type="entry name" value="C2 domain"/>
    <property type="match status" value="2"/>
</dbReference>
<dbReference type="Gene3D" id="3.40.50.300">
    <property type="entry name" value="P-loop containing nucleotide triphosphate hydrolases"/>
    <property type="match status" value="4"/>
</dbReference>
<dbReference type="Gene3D" id="1.10.3380.10">
    <property type="entry name" value="Sec63 N-terminal domain-like domain"/>
    <property type="match status" value="2"/>
</dbReference>
<dbReference type="Gene3D" id="1.10.10.10">
    <property type="entry name" value="Winged helix-like DNA-binding domain superfamily/Winged helix DNA-binding domain"/>
    <property type="match status" value="2"/>
</dbReference>
<dbReference type="InterPro" id="IPR003593">
    <property type="entry name" value="AAA+_ATPase"/>
</dbReference>
<dbReference type="InterPro" id="IPR041094">
    <property type="entry name" value="Brr2_helicase_PWI"/>
</dbReference>
<dbReference type="InterPro" id="IPR048863">
    <property type="entry name" value="BRR2_plug"/>
</dbReference>
<dbReference type="InterPro" id="IPR035892">
    <property type="entry name" value="C2_domain_sf"/>
</dbReference>
<dbReference type="InterPro" id="IPR011545">
    <property type="entry name" value="DEAD/DEAH_box_helicase_dom"/>
</dbReference>
<dbReference type="InterPro" id="IPR050474">
    <property type="entry name" value="Hel308_SKI2-like"/>
</dbReference>
<dbReference type="InterPro" id="IPR014001">
    <property type="entry name" value="Helicase_ATP-bd"/>
</dbReference>
<dbReference type="InterPro" id="IPR001650">
    <property type="entry name" value="Helicase_C-like"/>
</dbReference>
<dbReference type="InterPro" id="IPR014756">
    <property type="entry name" value="Ig_E-set"/>
</dbReference>
<dbReference type="InterPro" id="IPR027417">
    <property type="entry name" value="P-loop_NTPase"/>
</dbReference>
<dbReference type="InterPro" id="IPR004179">
    <property type="entry name" value="Sec63-dom"/>
</dbReference>
<dbReference type="InterPro" id="IPR036388">
    <property type="entry name" value="WH-like_DNA-bd_sf"/>
</dbReference>
<dbReference type="InterPro" id="IPR036390">
    <property type="entry name" value="WH_DNA-bd_sf"/>
</dbReference>
<dbReference type="PANTHER" id="PTHR47961:SF4">
    <property type="entry name" value="ACTIVATING SIGNAL COINTEGRATOR 1 COMPLEX SUBUNIT 3"/>
    <property type="match status" value="1"/>
</dbReference>
<dbReference type="PANTHER" id="PTHR47961">
    <property type="entry name" value="DNA POLYMERASE THETA, PUTATIVE (AFU_ORTHOLOGUE AFUA_1G05260)-RELATED"/>
    <property type="match status" value="1"/>
</dbReference>
<dbReference type="Pfam" id="PF21188">
    <property type="entry name" value="BRR2_plug"/>
    <property type="match status" value="1"/>
</dbReference>
<dbReference type="Pfam" id="PF00270">
    <property type="entry name" value="DEAD"/>
    <property type="match status" value="2"/>
</dbReference>
<dbReference type="Pfam" id="PF00271">
    <property type="entry name" value="Helicase_C"/>
    <property type="match status" value="2"/>
</dbReference>
<dbReference type="Pfam" id="PF18149">
    <property type="entry name" value="Helicase_PWI"/>
    <property type="match status" value="1"/>
</dbReference>
<dbReference type="Pfam" id="PF02889">
    <property type="entry name" value="Sec63"/>
    <property type="match status" value="2"/>
</dbReference>
<dbReference type="Pfam" id="PF23445">
    <property type="entry name" value="SNRNP200_wHTH"/>
    <property type="match status" value="2"/>
</dbReference>
<dbReference type="PIRSF" id="PIRSF039073">
    <property type="entry name" value="BRR2"/>
    <property type="match status" value="1"/>
</dbReference>
<dbReference type="SMART" id="SM00382">
    <property type="entry name" value="AAA"/>
    <property type="match status" value="2"/>
</dbReference>
<dbReference type="SMART" id="SM00487">
    <property type="entry name" value="DEXDc"/>
    <property type="match status" value="2"/>
</dbReference>
<dbReference type="SMART" id="SM00490">
    <property type="entry name" value="HELICc"/>
    <property type="match status" value="2"/>
</dbReference>
<dbReference type="SMART" id="SM00973">
    <property type="entry name" value="Sec63"/>
    <property type="match status" value="2"/>
</dbReference>
<dbReference type="SUPFAM" id="SSF81296">
    <property type="entry name" value="E set domains"/>
    <property type="match status" value="1"/>
</dbReference>
<dbReference type="SUPFAM" id="SSF52540">
    <property type="entry name" value="P-loop containing nucleoside triphosphate hydrolases"/>
    <property type="match status" value="4"/>
</dbReference>
<dbReference type="SUPFAM" id="SSF158702">
    <property type="entry name" value="Sec63 N-terminal domain-like"/>
    <property type="match status" value="2"/>
</dbReference>
<dbReference type="SUPFAM" id="SSF46785">
    <property type="entry name" value="Winged helix' DNA-binding domain"/>
    <property type="match status" value="2"/>
</dbReference>
<dbReference type="PROSITE" id="PS51192">
    <property type="entry name" value="HELICASE_ATP_BIND_1"/>
    <property type="match status" value="2"/>
</dbReference>
<dbReference type="PROSITE" id="PS51194">
    <property type="entry name" value="HELICASE_CTER"/>
    <property type="match status" value="2"/>
</dbReference>
<protein>
    <recommendedName>
        <fullName>Activating signal cointegrator 1 complex subunit 3-like</fullName>
        <ecNumber>3.6.4.-</ecNumber>
    </recommendedName>
</protein>
<reference key="1">
    <citation type="journal article" date="2005" name="Nature">
        <title>The genome of the social amoeba Dictyostelium discoideum.</title>
        <authorList>
            <person name="Eichinger L."/>
            <person name="Pachebat J.A."/>
            <person name="Gloeckner G."/>
            <person name="Rajandream M.A."/>
            <person name="Sucgang R."/>
            <person name="Berriman M."/>
            <person name="Song J."/>
            <person name="Olsen R."/>
            <person name="Szafranski K."/>
            <person name="Xu Q."/>
            <person name="Tunggal B."/>
            <person name="Kummerfeld S."/>
            <person name="Madera M."/>
            <person name="Konfortov B.A."/>
            <person name="Rivero F."/>
            <person name="Bankier A.T."/>
            <person name="Lehmann R."/>
            <person name="Hamlin N."/>
            <person name="Davies R."/>
            <person name="Gaudet P."/>
            <person name="Fey P."/>
            <person name="Pilcher K."/>
            <person name="Chen G."/>
            <person name="Saunders D."/>
            <person name="Sodergren E.J."/>
            <person name="Davis P."/>
            <person name="Kerhornou A."/>
            <person name="Nie X."/>
            <person name="Hall N."/>
            <person name="Anjard C."/>
            <person name="Hemphill L."/>
            <person name="Bason N."/>
            <person name="Farbrother P."/>
            <person name="Desany B."/>
            <person name="Just E."/>
            <person name="Morio T."/>
            <person name="Rost R."/>
            <person name="Churcher C.M."/>
            <person name="Cooper J."/>
            <person name="Haydock S."/>
            <person name="van Driessche N."/>
            <person name="Cronin A."/>
            <person name="Goodhead I."/>
            <person name="Muzny D.M."/>
            <person name="Mourier T."/>
            <person name="Pain A."/>
            <person name="Lu M."/>
            <person name="Harper D."/>
            <person name="Lindsay R."/>
            <person name="Hauser H."/>
            <person name="James K.D."/>
            <person name="Quiles M."/>
            <person name="Madan Babu M."/>
            <person name="Saito T."/>
            <person name="Buchrieser C."/>
            <person name="Wardroper A."/>
            <person name="Felder M."/>
            <person name="Thangavelu M."/>
            <person name="Johnson D."/>
            <person name="Knights A."/>
            <person name="Loulseged H."/>
            <person name="Mungall K.L."/>
            <person name="Oliver K."/>
            <person name="Price C."/>
            <person name="Quail M.A."/>
            <person name="Urushihara H."/>
            <person name="Hernandez J."/>
            <person name="Rabbinowitsch E."/>
            <person name="Steffen D."/>
            <person name="Sanders M."/>
            <person name="Ma J."/>
            <person name="Kohara Y."/>
            <person name="Sharp S."/>
            <person name="Simmonds M.N."/>
            <person name="Spiegler S."/>
            <person name="Tivey A."/>
            <person name="Sugano S."/>
            <person name="White B."/>
            <person name="Walker D."/>
            <person name="Woodward J.R."/>
            <person name="Winckler T."/>
            <person name="Tanaka Y."/>
            <person name="Shaulsky G."/>
            <person name="Schleicher M."/>
            <person name="Weinstock G.M."/>
            <person name="Rosenthal A."/>
            <person name="Cox E.C."/>
            <person name="Chisholm R.L."/>
            <person name="Gibbs R.A."/>
            <person name="Loomis W.F."/>
            <person name="Platzer M."/>
            <person name="Kay R.R."/>
            <person name="Williams J.G."/>
            <person name="Dear P.H."/>
            <person name="Noegel A.A."/>
            <person name="Barrell B.G."/>
            <person name="Kuspa A."/>
        </authorList>
    </citation>
    <scope>NUCLEOTIDE SEQUENCE [LARGE SCALE GENOMIC DNA]</scope>
    <source>
        <strain>AX4</strain>
    </source>
</reference>
<feature type="chain" id="PRO_0000371331" description="Activating signal cointegrator 1 complex subunit 3-like">
    <location>
        <begin position="1"/>
        <end position="2237"/>
    </location>
</feature>
<feature type="domain" description="Helicase ATP-binding 1" evidence="2">
    <location>
        <begin position="561"/>
        <end position="745"/>
    </location>
</feature>
<feature type="domain" description="Helicase C-terminal 1" evidence="3">
    <location>
        <begin position="755"/>
        <end position="990"/>
    </location>
</feature>
<feature type="domain" description="SEC63 1">
    <location>
        <begin position="1050"/>
        <end position="1356"/>
    </location>
</feature>
<feature type="domain" description="Helicase ATP-binding 2" evidence="2">
    <location>
        <begin position="1407"/>
        <end position="1584"/>
    </location>
</feature>
<feature type="domain" description="Helicase C-terminal 2" evidence="3">
    <location>
        <begin position="1657"/>
        <end position="1832"/>
    </location>
</feature>
<feature type="domain" description="SEC63 2">
    <location>
        <begin position="1892"/>
        <end position="2215"/>
    </location>
</feature>
<feature type="region of interest" description="Disordered" evidence="4">
    <location>
        <begin position="1"/>
        <end position="48"/>
    </location>
</feature>
<feature type="region of interest" description="Disordered" evidence="4">
    <location>
        <begin position="71"/>
        <end position="118"/>
    </location>
</feature>
<feature type="region of interest" description="Disordered" evidence="4">
    <location>
        <begin position="242"/>
        <end position="330"/>
    </location>
</feature>
<feature type="region of interest" description="Disordered" evidence="4">
    <location>
        <begin position="445"/>
        <end position="472"/>
    </location>
</feature>
<feature type="coiled-coil region" evidence="1">
    <location>
        <begin position="440"/>
        <end position="468"/>
    </location>
</feature>
<feature type="short sequence motif" description="DEAH box">
    <location>
        <begin position="687"/>
        <end position="690"/>
    </location>
</feature>
<feature type="short sequence motif" description="DEAH box">
    <location>
        <begin position="1526"/>
        <end position="1529"/>
    </location>
</feature>
<feature type="compositionally biased region" description="Basic and acidic residues" evidence="4">
    <location>
        <begin position="24"/>
        <end position="37"/>
    </location>
</feature>
<feature type="compositionally biased region" description="Polar residues" evidence="4">
    <location>
        <begin position="79"/>
        <end position="97"/>
    </location>
</feature>
<feature type="compositionally biased region" description="Low complexity" evidence="4">
    <location>
        <begin position="105"/>
        <end position="114"/>
    </location>
</feature>
<feature type="compositionally biased region" description="Acidic residues" evidence="4">
    <location>
        <begin position="242"/>
        <end position="282"/>
    </location>
</feature>
<feature type="compositionally biased region" description="Basic and acidic residues" evidence="4">
    <location>
        <begin position="312"/>
        <end position="325"/>
    </location>
</feature>
<feature type="compositionally biased region" description="Basic and acidic residues" evidence="4">
    <location>
        <begin position="446"/>
        <end position="460"/>
    </location>
</feature>
<feature type="binding site" evidence="2">
    <location>
        <begin position="574"/>
        <end position="581"/>
    </location>
    <ligand>
        <name>ATP</name>
        <dbReference type="ChEBI" id="CHEBI:30616"/>
    </ligand>
</feature>
<feature type="binding site" evidence="2">
    <location>
        <begin position="1420"/>
        <end position="1427"/>
    </location>
    <ligand>
        <name>ATP</name>
        <dbReference type="ChEBI" id="CHEBI:30616"/>
    </ligand>
</feature>
<keyword id="KW-0067">ATP-binding</keyword>
<keyword id="KW-0175">Coiled coil</keyword>
<keyword id="KW-0347">Helicase</keyword>
<keyword id="KW-0378">Hydrolase</keyword>
<keyword id="KW-0547">Nucleotide-binding</keyword>
<keyword id="KW-1185">Reference proteome</keyword>
<keyword id="KW-0677">Repeat</keyword>
<sequence length="2237" mass="256437">MSEELARSKQYGYKENSNLVFYSERNRSELKEPKGEPETLWGRLRGEMGDRVNYSKPLELLEKMQNLKRKTIEKEGGDVNSSNDTYSTTKKVKNQNPLEKKSTNRKSNGNNNNEKPIDILSATESFQGLYKPKTKETRITYETLLTFIQRYVGDQPTEVVKGALDEILSILKDDTIRAPEKKIEISKLLKGLNDVSFAELTQLGKQITDFKDSELAKQQQQQQQQQSMDSLDDEQGVAVIIDEEEEEENLSDFEIRDDDDDDDDVDNNEVDDNNNNDSEAQDSEIQTKDENNNDDDENQKIKENNNNNNKSQKPDTKNTKDDKNNNSKLISPNEIDSFWIQRKISEFERDHDLSKQLAEKTLNILRQPNVRRCEQQLVDLFTIDKLDFLKLIINNKQTILYCTLLAKAENDQERKKIEDEMSSNPVTLSILNRLKGNEVTAATTEKTIEKTESNKKDVEMKQQQQQQQDEIKKPKKLLNLEELSFQQGSHLMTNKEFKFPKGSKREQYKGFEEIHVPARANPPFNPNERLISIEELPEWSRLPFEESGVKSLNRVQSKLFDCAFKTDNNLLLSAPTSSGKTNVAMLTILHEIGKNRDRDSGKIRLDAFKIVYIAPMKSLVQEMVGNFSKRLKSYGIVVNELTGDQSLTNKQISETQIIVTTPEKWDIITRKSGDRAYTQLVKLIIIDEIHLLHDERGPVLECIVARTLRMIESTQQMVRLVGLSATLPNYEDVATFLRVEPDGVFYFDSSYRPIPLEQQYIGISDRGIKQLQRCNDITFTKVSERVGDHQILIFVHSRRETAKTGKDLRDRAVEDQSIDRYIRDPASREILRATASKQIQNAELKDLLPYGIGIHHAGLSRSDRSLVEDLFGDNRIQVLISTATLAWGVNLPAHTVIIKGTQIYNPEKGWCELSPLDVTQMLGRAGRPPFDKEGEGIIITSQHELQFYLSLLNTQLSIESQFISRIADNLNAEIVLGSIQTVRDAVNWLGYTYLYICMIRNPPLYEISYDDFEKDPLLEQRRLDLVHSAATILEKNSLIKYDRKSGKLQSTELGKVASHYYITNSSMSIYQEHLKPSMSDIELLRVFSLSSEFKNVVVREGEKFELEKLLERVPIPIKENIEEPSSKINVLLQTYISNLKLDGFALVVDMFYIAQSASRITRALFEIVLKKGWAQLAKKILNLAKMIDSKMWSSQSPLRQFHKISPKVLNQLERRGIPIEDLYEYNSQQLGNAIQNPSEGKQLFDLIHNFPKLDLTAHVQPILHGLLRVELSITPDFQYDERYHNNSIGWWIIVEDVDGERILYFEYFSLKKKMVNGEDQLVSFTVPLSQPLPPQYYVRVISDHWIGAEYSLPISFQHLILPEKYPPCRPLLDLQPLPIQVLKDPKAESIFKPTFSIFNAIQTQVFNCMYQSNDNAFISAPTNSGKTVCAEIALIRCFKQNPKAKVVYLAPMQDLASVRLKDWSNKFGVKSPFGLVVSDLTGDAVTDNKILDRSNIIVTNCEKWDILSRKWKQRKALQSINLLIVDELHLIGGEYGPTMEIVVSRMRYISTQTGNALRVIALSSSIANARDLVLWIGATPQTCYNFHPNVRPIPVEYQIQGFEFPHFNARMLAMTKPTVYEVAKNKNQQSIVFVPTRKLSRSLAADIIANVSSFEDTLTKPYLVCEEHVLTPYLEDVDSFALKQSLQMGVAFYHDGLTERERRVVEILFRSGSIRVLIATHSVAWLLDNVFAQLVVIMGTQLYQGKDIRYIDYPINDILQMIGRAGKQEGGGVISNKVAKVLLLCHAPKKEYYKMFLNEPLPVESHLDHCLHDQFNSEIVTKTITKKQDALDYLTWTFLYRRLNQNPNYYNLSGVSHLHLSEHLSELVENTLVELEQSNCITIQDDQDKVSPLNLGIIASYYYLKYQTIELFGSSLKSTTRRRGIMDIISNAPEFNSLPIRHREDQILMKLASHLPQKIDKPNYQEISTKVNVLLQCHFSRESISADLYQDQKFILENATRLLQAIVDVISSNSWLQPAIAAMELSQMITQAMWDSDSVFKQLPHMNKRRIDAITSQGIESVFDLMSLDDNSRIQLLDLSQQESNDLVQSFMKYPDIDISYQVQDEDDLHADSIMTVEMVIERDLGDDEENPIEINDSINVVSAPYYPKEKICGWWALIGDSKNNHLLAIKRITFLKKTKVKFEFPTPAVGKHQLSLYLFSDSYNGCDQEHELNINILPAEIEDEDEDEEEDNEMDE</sequence>
<comment type="similarity">
    <text evidence="5">Belongs to the helicase family.</text>
</comment>
<gene>
    <name type="primary">ascc3l</name>
    <name type="ORF">DDB_G0270042</name>
</gene>